<feature type="chain" id="PRO_0000180841" description="Flagellar basal-body rod protein FlgF">
    <location>
        <begin position="1"/>
        <end position="241"/>
    </location>
</feature>
<feature type="sequence conflict" description="In Ref. 1; AAB48836." evidence="2" ref="1">
    <location>
        <position position="71"/>
    </location>
</feature>
<feature type="sequence conflict" description="In Ref. 1; AAB48836." evidence="2" ref="1">
    <original>A</original>
    <variation>P</variation>
    <location>
        <position position="125"/>
    </location>
</feature>
<feature type="sequence conflict" description="In Ref. 1; AAB48836." evidence="2" ref="1">
    <original>IA</original>
    <variation>TC</variation>
    <location>
        <begin position="151"/>
        <end position="152"/>
    </location>
</feature>
<feature type="sequence conflict" description="In Ref. 2; CAA11956." evidence="2" ref="2">
    <original>V</original>
    <variation>D</variation>
    <location>
        <position position="173"/>
    </location>
</feature>
<feature type="sequence conflict" description="In Ref. 1; AAB48836." evidence="2" ref="1">
    <original>EPVV</original>
    <variation>NRR</variation>
    <location>
        <begin position="180"/>
        <end position="183"/>
    </location>
</feature>
<feature type="sequence conflict" description="In Ref. 1; AAB48836." evidence="2" ref="1">
    <original>A</original>
    <variation>G</variation>
    <location>
        <position position="202"/>
    </location>
</feature>
<feature type="sequence conflict" description="In Ref. 1; AAB48836." evidence="2" ref="1">
    <original>DSEGSLDKAIETLGGSR</original>
    <variation>ATVRDRSIRPSRRSAAGP</variation>
    <location>
        <begin position="225"/>
        <end position="241"/>
    </location>
</feature>
<comment type="subunit">
    <text evidence="1">The basal body constitutes a major portion of the flagellar organelle and consists of five rings (E,L,P,S, and M) mounted on a central rod. The rod consists of about 26 subunits of FlgG in the distal portion, and FlgB, FlgC and FlgF are thought to build up the proximal portion of the rod with about 6 subunits each (By similarity).</text>
</comment>
<comment type="subcellular location">
    <subcellularLocation>
        <location evidence="1">Bacterial flagellum basal body</location>
    </subcellularLocation>
</comment>
<comment type="similarity">
    <text evidence="2">Belongs to the flagella basal body rod proteins family.</text>
</comment>
<comment type="sequence caution" evidence="2">
    <conflict type="erroneous initiation">
        <sequence resource="EMBL-CDS" id="CAA11956"/>
    </conflict>
</comment>
<name>FLGF_RHIME</name>
<dbReference type="EMBL" id="U87146">
    <property type="protein sequence ID" value="AAB48836.1"/>
    <property type="molecule type" value="Genomic_DNA"/>
</dbReference>
<dbReference type="EMBL" id="AJ224445">
    <property type="protein sequence ID" value="CAA11956.1"/>
    <property type="status" value="ALT_INIT"/>
    <property type="molecule type" value="Genomic_DNA"/>
</dbReference>
<dbReference type="EMBL" id="AL591688">
    <property type="protein sequence ID" value="CAC45228.1"/>
    <property type="molecule type" value="Genomic_DNA"/>
</dbReference>
<dbReference type="RefSeq" id="NP_384762.1">
    <property type="nucleotide sequence ID" value="NC_003047.1"/>
</dbReference>
<dbReference type="RefSeq" id="WP_010968729.1">
    <property type="nucleotide sequence ID" value="NC_003047.1"/>
</dbReference>
<dbReference type="SMR" id="O54248"/>
<dbReference type="DNASU" id="1232295"/>
<dbReference type="EnsemblBacteria" id="CAC45228">
    <property type="protein sequence ID" value="CAC45228"/>
    <property type="gene ID" value="SMc03024"/>
</dbReference>
<dbReference type="GeneID" id="89574959"/>
<dbReference type="KEGG" id="sme:SMc03024"/>
<dbReference type="PATRIC" id="fig|266834.11.peg.2030"/>
<dbReference type="eggNOG" id="COG4786">
    <property type="taxonomic scope" value="Bacteria"/>
</dbReference>
<dbReference type="HOGENOM" id="CLU_013687_0_0_5"/>
<dbReference type="OrthoDB" id="9804559at2"/>
<dbReference type="Proteomes" id="UP000001976">
    <property type="component" value="Chromosome"/>
</dbReference>
<dbReference type="GO" id="GO:0030694">
    <property type="term" value="C:bacterial-type flagellum basal body, rod"/>
    <property type="evidence" value="ECO:0007669"/>
    <property type="project" value="InterPro"/>
</dbReference>
<dbReference type="GO" id="GO:0071978">
    <property type="term" value="P:bacterial-type flagellum-dependent swarming motility"/>
    <property type="evidence" value="ECO:0007669"/>
    <property type="project" value="TreeGrafter"/>
</dbReference>
<dbReference type="InterPro" id="IPR001444">
    <property type="entry name" value="Flag_bb_rod_N"/>
</dbReference>
<dbReference type="InterPro" id="IPR020013">
    <property type="entry name" value="Flagellar_FlgE/F/G"/>
</dbReference>
<dbReference type="InterPro" id="IPR010930">
    <property type="entry name" value="Flg_bb/hook_C_dom"/>
</dbReference>
<dbReference type="InterPro" id="IPR037925">
    <property type="entry name" value="FlgE/F/G-like"/>
</dbReference>
<dbReference type="InterPro" id="IPR012836">
    <property type="entry name" value="FlgF"/>
</dbReference>
<dbReference type="InterPro" id="IPR053967">
    <property type="entry name" value="LlgE_F_G-like_D1"/>
</dbReference>
<dbReference type="NCBIfam" id="TIGR03506">
    <property type="entry name" value="FlgEFG_subfam"/>
    <property type="match status" value="1"/>
</dbReference>
<dbReference type="NCBIfam" id="TIGR02490">
    <property type="entry name" value="flgF"/>
    <property type="match status" value="1"/>
</dbReference>
<dbReference type="NCBIfam" id="NF009282">
    <property type="entry name" value="PRK12642.1"/>
    <property type="match status" value="1"/>
</dbReference>
<dbReference type="PANTHER" id="PTHR30435:SF19">
    <property type="entry name" value="FLAGELLAR BASAL-BODY ROD PROTEIN FLGG"/>
    <property type="match status" value="1"/>
</dbReference>
<dbReference type="PANTHER" id="PTHR30435">
    <property type="entry name" value="FLAGELLAR PROTEIN"/>
    <property type="match status" value="1"/>
</dbReference>
<dbReference type="Pfam" id="PF00460">
    <property type="entry name" value="Flg_bb_rod"/>
    <property type="match status" value="1"/>
</dbReference>
<dbReference type="Pfam" id="PF06429">
    <property type="entry name" value="Flg_bbr_C"/>
    <property type="match status" value="1"/>
</dbReference>
<dbReference type="Pfam" id="PF22692">
    <property type="entry name" value="LlgE_F_G_D1"/>
    <property type="match status" value="1"/>
</dbReference>
<dbReference type="SUPFAM" id="SSF117143">
    <property type="entry name" value="Flagellar hook protein flgE"/>
    <property type="match status" value="1"/>
</dbReference>
<reference key="1">
    <citation type="submission" date="1997-01" db="EMBL/GenBank/DDBJ databases">
        <authorList>
            <person name="Hazelbauer G.L."/>
            <person name="Daley I.J."/>
            <person name="Dutton D.P."/>
            <person name="Lilly A.A."/>
        </authorList>
    </citation>
    <scope>NUCLEOTIDE SEQUENCE [GENOMIC DNA]</scope>
    <source>
        <strain>RCR2011 / SU47</strain>
    </source>
</reference>
<reference key="2">
    <citation type="journal article" date="1998" name="Gene">
        <title>Mapping of 41 chemotaxis, flagellar and motility genes to a single region of the Sinorhizobium meliloti chromosome.</title>
        <authorList>
            <person name="Sourjik V."/>
            <person name="Sterr W."/>
            <person name="Platzer J."/>
            <person name="Bos I."/>
            <person name="Haslbeck M."/>
            <person name="Schmitt R."/>
        </authorList>
    </citation>
    <scope>NUCLEOTIDE SEQUENCE [GENOMIC DNA]</scope>
    <source>
        <strain>RU11/001</strain>
    </source>
</reference>
<reference key="3">
    <citation type="journal article" date="2001" name="Proc. Natl. Acad. Sci. U.S.A.">
        <title>Analysis of the chromosome sequence of the legume symbiont Sinorhizobium meliloti strain 1021.</title>
        <authorList>
            <person name="Capela D."/>
            <person name="Barloy-Hubler F."/>
            <person name="Gouzy J."/>
            <person name="Bothe G."/>
            <person name="Ampe F."/>
            <person name="Batut J."/>
            <person name="Boistard P."/>
            <person name="Becker A."/>
            <person name="Boutry M."/>
            <person name="Cadieu E."/>
            <person name="Dreano S."/>
            <person name="Gloux S."/>
            <person name="Godrie T."/>
            <person name="Goffeau A."/>
            <person name="Kahn D."/>
            <person name="Kiss E."/>
            <person name="Lelaure V."/>
            <person name="Masuy D."/>
            <person name="Pohl T."/>
            <person name="Portetelle D."/>
            <person name="Puehler A."/>
            <person name="Purnelle B."/>
            <person name="Ramsperger U."/>
            <person name="Renard C."/>
            <person name="Thebault P."/>
            <person name="Vandenbol M."/>
            <person name="Weidner S."/>
            <person name="Galibert F."/>
        </authorList>
    </citation>
    <scope>NUCLEOTIDE SEQUENCE [LARGE SCALE GENOMIC DNA]</scope>
    <source>
        <strain>1021</strain>
    </source>
</reference>
<reference key="4">
    <citation type="journal article" date="2001" name="Science">
        <title>The composite genome of the legume symbiont Sinorhizobium meliloti.</title>
        <authorList>
            <person name="Galibert F."/>
            <person name="Finan T.M."/>
            <person name="Long S.R."/>
            <person name="Puehler A."/>
            <person name="Abola P."/>
            <person name="Ampe F."/>
            <person name="Barloy-Hubler F."/>
            <person name="Barnett M.J."/>
            <person name="Becker A."/>
            <person name="Boistard P."/>
            <person name="Bothe G."/>
            <person name="Boutry M."/>
            <person name="Bowser L."/>
            <person name="Buhrmester J."/>
            <person name="Cadieu E."/>
            <person name="Capela D."/>
            <person name="Chain P."/>
            <person name="Cowie A."/>
            <person name="Davis R.W."/>
            <person name="Dreano S."/>
            <person name="Federspiel N.A."/>
            <person name="Fisher R.F."/>
            <person name="Gloux S."/>
            <person name="Godrie T."/>
            <person name="Goffeau A."/>
            <person name="Golding B."/>
            <person name="Gouzy J."/>
            <person name="Gurjal M."/>
            <person name="Hernandez-Lucas I."/>
            <person name="Hong A."/>
            <person name="Huizar L."/>
            <person name="Hyman R.W."/>
            <person name="Jones T."/>
            <person name="Kahn D."/>
            <person name="Kahn M.L."/>
            <person name="Kalman S."/>
            <person name="Keating D.H."/>
            <person name="Kiss E."/>
            <person name="Komp C."/>
            <person name="Lelaure V."/>
            <person name="Masuy D."/>
            <person name="Palm C."/>
            <person name="Peck M.C."/>
            <person name="Pohl T.M."/>
            <person name="Portetelle D."/>
            <person name="Purnelle B."/>
            <person name="Ramsperger U."/>
            <person name="Surzycki R."/>
            <person name="Thebault P."/>
            <person name="Vandenbol M."/>
            <person name="Vorhoelter F.J."/>
            <person name="Weidner S."/>
            <person name="Wells D.H."/>
            <person name="Wong K."/>
            <person name="Yeh K.-C."/>
            <person name="Batut J."/>
        </authorList>
    </citation>
    <scope>NUCLEOTIDE SEQUENCE [LARGE SCALE GENOMIC DNA]</scope>
    <source>
        <strain>1021</strain>
    </source>
</reference>
<gene>
    <name type="primary">flgF</name>
    <name type="ordered locus">R00656</name>
    <name type="ORF">SMc03024</name>
</gene>
<keyword id="KW-0975">Bacterial flagellum</keyword>
<keyword id="KW-1185">Reference proteome</keyword>
<sequence length="241" mass="25581">MQTGLYVALSSQMALEKRLNTLADNIANSNTVGFRATEVKFNQVLGDTKPTKVSYVSEGEEFLSTKTGALARTGSALDFAIKGDAWFSIDTPGGPALTRDGRFTLTETGELVTIKGYPVLDAGGAPIQLNGGAGEIAVGADGAIHQNGVQIALLGLYEADFSKGFMRYDNSSVMPAAQPEPVVDRFDVGVMQGFLEESNVNAIQEMSQLIMITRAFDNVTALMRDSEGSLDKAIETLGGSR</sequence>
<accession>O54248</accession>
<accession>P96997</accession>
<evidence type="ECO:0000250" key="1"/>
<evidence type="ECO:0000305" key="2"/>
<organism>
    <name type="scientific">Rhizobium meliloti (strain 1021)</name>
    <name type="common">Ensifer meliloti</name>
    <name type="synonym">Sinorhizobium meliloti</name>
    <dbReference type="NCBI Taxonomy" id="266834"/>
    <lineage>
        <taxon>Bacteria</taxon>
        <taxon>Pseudomonadati</taxon>
        <taxon>Pseudomonadota</taxon>
        <taxon>Alphaproteobacteria</taxon>
        <taxon>Hyphomicrobiales</taxon>
        <taxon>Rhizobiaceae</taxon>
        <taxon>Sinorhizobium/Ensifer group</taxon>
        <taxon>Sinorhizobium</taxon>
    </lineage>
</organism>
<proteinExistence type="inferred from homology"/>
<protein>
    <recommendedName>
        <fullName>Flagellar basal-body rod protein FlgF</fullName>
    </recommendedName>
</protein>